<sequence>MTVETFDPNKVANKTTTLETPVKVLSDNQSSQQGVGSRIGFVSLGCPKNLVDSERILTQLRTEGYDVVPTYNDADLVIVNTCGFIDAAVEESLDTIGEALKENGKVIVTGCLGVKEDEIRELHPNVLAITGPHAYETVVEQVHEHLPKPQHNPFADLIPDHGVKLTPRHYAYLKISEGCNHRCTFCIIPSMRGDLVSRPVGNVLDEAKRLKEAGVKELLVISQDTSAYGVDVKHRTGFWNGMPVKTHMQQLCEQLGEMGIWVRLHYVYPYPHVDDLIPLMNDGKILPYLDIPFQHANKRILRLMKRPGSAERVLERVKKWREQCPSLVIRSTFIVGFPGETEEEFEELLDFLREAQLDRVGAFAYSPVEGARANDLPDPVPEDIKQERLARFMEVQGEISAARLKARIGNEYQVVIDSVDAEGAVGRTYADAPEVDGLVHLNGVYDVKPGDRVWAEVIHANEHDVWAVLSEDQDDEEAHATEGAE</sequence>
<reference key="1">
    <citation type="journal article" date="2008" name="ISME J.">
        <title>Comparative genomics of two ecotypes of the marine planktonic copiotroph Alteromonas macleodii suggests alternative lifestyles associated with different kinds of particulate organic matter.</title>
        <authorList>
            <person name="Ivars-Martinez E."/>
            <person name="Martin-Cuadrado A.-B."/>
            <person name="D'Auria G."/>
            <person name="Mira A."/>
            <person name="Ferriera S."/>
            <person name="Johnson J."/>
            <person name="Friedman R."/>
            <person name="Rodriguez-Valera F."/>
        </authorList>
    </citation>
    <scope>NUCLEOTIDE SEQUENCE [LARGE SCALE GENOMIC DNA]</scope>
    <source>
        <strain>DSM 17117 / CIP 110805 / LMG 28347 / Deep ecotype</strain>
    </source>
</reference>
<organism>
    <name type="scientific">Alteromonas mediterranea (strain DSM 17117 / CIP 110805 / LMG 28347 / Deep ecotype)</name>
    <dbReference type="NCBI Taxonomy" id="1774373"/>
    <lineage>
        <taxon>Bacteria</taxon>
        <taxon>Pseudomonadati</taxon>
        <taxon>Pseudomonadota</taxon>
        <taxon>Gammaproteobacteria</taxon>
        <taxon>Alteromonadales</taxon>
        <taxon>Alteromonadaceae</taxon>
        <taxon>Alteromonas/Salinimonas group</taxon>
        <taxon>Alteromonas</taxon>
    </lineage>
</organism>
<feature type="chain" id="PRO_0000374695" description="Ribosomal protein uS12 methylthiotransferase RimO">
    <location>
        <begin position="1"/>
        <end position="485"/>
    </location>
</feature>
<feature type="domain" description="MTTase N-terminal" evidence="1">
    <location>
        <begin position="37"/>
        <end position="147"/>
    </location>
</feature>
<feature type="domain" description="Radical SAM core" evidence="2">
    <location>
        <begin position="165"/>
        <end position="402"/>
    </location>
</feature>
<feature type="domain" description="TRAM" evidence="1">
    <location>
        <begin position="405"/>
        <end position="471"/>
    </location>
</feature>
<feature type="binding site" evidence="1">
    <location>
        <position position="46"/>
    </location>
    <ligand>
        <name>[4Fe-4S] cluster</name>
        <dbReference type="ChEBI" id="CHEBI:49883"/>
        <label>1</label>
    </ligand>
</feature>
<feature type="binding site" evidence="1">
    <location>
        <position position="82"/>
    </location>
    <ligand>
        <name>[4Fe-4S] cluster</name>
        <dbReference type="ChEBI" id="CHEBI:49883"/>
        <label>1</label>
    </ligand>
</feature>
<feature type="binding site" evidence="1">
    <location>
        <position position="111"/>
    </location>
    <ligand>
        <name>[4Fe-4S] cluster</name>
        <dbReference type="ChEBI" id="CHEBI:49883"/>
        <label>1</label>
    </ligand>
</feature>
<feature type="binding site" evidence="1">
    <location>
        <position position="179"/>
    </location>
    <ligand>
        <name>[4Fe-4S] cluster</name>
        <dbReference type="ChEBI" id="CHEBI:49883"/>
        <label>2</label>
        <note>4Fe-4S-S-AdoMet</note>
    </ligand>
</feature>
<feature type="binding site" evidence="1">
    <location>
        <position position="183"/>
    </location>
    <ligand>
        <name>[4Fe-4S] cluster</name>
        <dbReference type="ChEBI" id="CHEBI:49883"/>
        <label>2</label>
        <note>4Fe-4S-S-AdoMet</note>
    </ligand>
</feature>
<feature type="binding site" evidence="1">
    <location>
        <position position="186"/>
    </location>
    <ligand>
        <name>[4Fe-4S] cluster</name>
        <dbReference type="ChEBI" id="CHEBI:49883"/>
        <label>2</label>
        <note>4Fe-4S-S-AdoMet</note>
    </ligand>
</feature>
<comment type="function">
    <text evidence="1">Catalyzes the methylthiolation of an aspartic acid residue of ribosomal protein uS12.</text>
</comment>
<comment type="catalytic activity">
    <reaction evidence="1">
        <text>L-aspartate(89)-[ribosomal protein uS12]-hydrogen + (sulfur carrier)-SH + AH2 + 2 S-adenosyl-L-methionine = 3-methylsulfanyl-L-aspartate(89)-[ribosomal protein uS12]-hydrogen + (sulfur carrier)-H + 5'-deoxyadenosine + L-methionine + A + S-adenosyl-L-homocysteine + 2 H(+)</text>
        <dbReference type="Rhea" id="RHEA:37087"/>
        <dbReference type="Rhea" id="RHEA-COMP:10460"/>
        <dbReference type="Rhea" id="RHEA-COMP:10461"/>
        <dbReference type="Rhea" id="RHEA-COMP:14737"/>
        <dbReference type="Rhea" id="RHEA-COMP:14739"/>
        <dbReference type="ChEBI" id="CHEBI:13193"/>
        <dbReference type="ChEBI" id="CHEBI:15378"/>
        <dbReference type="ChEBI" id="CHEBI:17319"/>
        <dbReference type="ChEBI" id="CHEBI:17499"/>
        <dbReference type="ChEBI" id="CHEBI:29917"/>
        <dbReference type="ChEBI" id="CHEBI:29961"/>
        <dbReference type="ChEBI" id="CHEBI:57844"/>
        <dbReference type="ChEBI" id="CHEBI:57856"/>
        <dbReference type="ChEBI" id="CHEBI:59789"/>
        <dbReference type="ChEBI" id="CHEBI:64428"/>
        <dbReference type="ChEBI" id="CHEBI:73599"/>
        <dbReference type="EC" id="2.8.4.4"/>
    </reaction>
</comment>
<comment type="cofactor">
    <cofactor evidence="1">
        <name>[4Fe-4S] cluster</name>
        <dbReference type="ChEBI" id="CHEBI:49883"/>
    </cofactor>
    <text evidence="1">Binds 2 [4Fe-4S] clusters. One cluster is coordinated with 3 cysteines and an exchangeable S-adenosyl-L-methionine.</text>
</comment>
<comment type="subcellular location">
    <subcellularLocation>
        <location evidence="1">Cytoplasm</location>
    </subcellularLocation>
</comment>
<comment type="similarity">
    <text evidence="1">Belongs to the methylthiotransferase family. RimO subfamily.</text>
</comment>
<evidence type="ECO:0000255" key="1">
    <source>
        <dbReference type="HAMAP-Rule" id="MF_01865"/>
    </source>
</evidence>
<evidence type="ECO:0000255" key="2">
    <source>
        <dbReference type="PROSITE-ProRule" id="PRU01266"/>
    </source>
</evidence>
<accession>B4RYE6</accession>
<accession>F2GC08</accession>
<keyword id="KW-0004">4Fe-4S</keyword>
<keyword id="KW-0963">Cytoplasm</keyword>
<keyword id="KW-0408">Iron</keyword>
<keyword id="KW-0411">Iron-sulfur</keyword>
<keyword id="KW-0479">Metal-binding</keyword>
<keyword id="KW-0949">S-adenosyl-L-methionine</keyword>
<keyword id="KW-0808">Transferase</keyword>
<proteinExistence type="inferred from homology"/>
<name>RIMO_ALTMD</name>
<gene>
    <name evidence="1" type="primary">rimO</name>
    <name type="ordered locus">MADE_1009430</name>
</gene>
<protein>
    <recommendedName>
        <fullName evidence="1">Ribosomal protein uS12 methylthiotransferase RimO</fullName>
        <shortName evidence="1">uS12 MTTase</shortName>
        <shortName evidence="1">uS12 methylthiotransferase</shortName>
        <ecNumber evidence="1">2.8.4.4</ecNumber>
    </recommendedName>
    <alternativeName>
        <fullName evidence="1">Ribosomal protein uS12 (aspartate-C(3))-methylthiotransferase</fullName>
    </alternativeName>
    <alternativeName>
        <fullName evidence="1">Ribosome maturation factor RimO</fullName>
    </alternativeName>
</protein>
<dbReference type="EC" id="2.8.4.4" evidence="1"/>
<dbReference type="EMBL" id="CP001103">
    <property type="protein sequence ID" value="AEA98024.1"/>
    <property type="molecule type" value="Genomic_DNA"/>
</dbReference>
<dbReference type="RefSeq" id="WP_012518350.1">
    <property type="nucleotide sequence ID" value="NC_011138.3"/>
</dbReference>
<dbReference type="SMR" id="B4RYE6"/>
<dbReference type="KEGG" id="amc:MADE_1009430"/>
<dbReference type="HOGENOM" id="CLU_018697_0_0_6"/>
<dbReference type="Proteomes" id="UP000001870">
    <property type="component" value="Chromosome"/>
</dbReference>
<dbReference type="GO" id="GO:0005829">
    <property type="term" value="C:cytosol"/>
    <property type="evidence" value="ECO:0007669"/>
    <property type="project" value="TreeGrafter"/>
</dbReference>
<dbReference type="GO" id="GO:0051539">
    <property type="term" value="F:4 iron, 4 sulfur cluster binding"/>
    <property type="evidence" value="ECO:0007669"/>
    <property type="project" value="UniProtKB-UniRule"/>
</dbReference>
<dbReference type="GO" id="GO:0035599">
    <property type="term" value="F:aspartic acid methylthiotransferase activity"/>
    <property type="evidence" value="ECO:0007669"/>
    <property type="project" value="TreeGrafter"/>
</dbReference>
<dbReference type="GO" id="GO:0046872">
    <property type="term" value="F:metal ion binding"/>
    <property type="evidence" value="ECO:0007669"/>
    <property type="project" value="UniProtKB-KW"/>
</dbReference>
<dbReference type="GO" id="GO:0103039">
    <property type="term" value="F:protein methylthiotransferase activity"/>
    <property type="evidence" value="ECO:0007669"/>
    <property type="project" value="UniProtKB-EC"/>
</dbReference>
<dbReference type="GO" id="GO:0006400">
    <property type="term" value="P:tRNA modification"/>
    <property type="evidence" value="ECO:0007669"/>
    <property type="project" value="InterPro"/>
</dbReference>
<dbReference type="CDD" id="cd01335">
    <property type="entry name" value="Radical_SAM"/>
    <property type="match status" value="1"/>
</dbReference>
<dbReference type="FunFam" id="3.40.50.12160:FF:000002">
    <property type="entry name" value="Ribosomal protein S12 methylthiotransferase RimO"/>
    <property type="match status" value="1"/>
</dbReference>
<dbReference type="FunFam" id="3.80.30.20:FF:000001">
    <property type="entry name" value="tRNA-2-methylthio-N(6)-dimethylallyladenosine synthase 2"/>
    <property type="match status" value="1"/>
</dbReference>
<dbReference type="Gene3D" id="3.40.50.12160">
    <property type="entry name" value="Methylthiotransferase, N-terminal domain"/>
    <property type="match status" value="1"/>
</dbReference>
<dbReference type="Gene3D" id="2.40.50.140">
    <property type="entry name" value="Nucleic acid-binding proteins"/>
    <property type="match status" value="1"/>
</dbReference>
<dbReference type="Gene3D" id="3.80.30.20">
    <property type="entry name" value="tm_1862 like domain"/>
    <property type="match status" value="1"/>
</dbReference>
<dbReference type="HAMAP" id="MF_01865">
    <property type="entry name" value="MTTase_RimO"/>
    <property type="match status" value="1"/>
</dbReference>
<dbReference type="InterPro" id="IPR006638">
    <property type="entry name" value="Elp3/MiaA/NifB-like_rSAM"/>
</dbReference>
<dbReference type="InterPro" id="IPR005839">
    <property type="entry name" value="Methylthiotransferase"/>
</dbReference>
<dbReference type="InterPro" id="IPR020612">
    <property type="entry name" value="Methylthiotransferase_CS"/>
</dbReference>
<dbReference type="InterPro" id="IPR013848">
    <property type="entry name" value="Methylthiotransferase_N"/>
</dbReference>
<dbReference type="InterPro" id="IPR038135">
    <property type="entry name" value="Methylthiotransferase_N_sf"/>
</dbReference>
<dbReference type="InterPro" id="IPR012340">
    <property type="entry name" value="NA-bd_OB-fold"/>
</dbReference>
<dbReference type="InterPro" id="IPR005840">
    <property type="entry name" value="Ribosomal_uS12_MeSTrfase_RimO"/>
</dbReference>
<dbReference type="InterPro" id="IPR007197">
    <property type="entry name" value="rSAM"/>
</dbReference>
<dbReference type="InterPro" id="IPR023404">
    <property type="entry name" value="rSAM_horseshoe"/>
</dbReference>
<dbReference type="InterPro" id="IPR002792">
    <property type="entry name" value="TRAM_dom"/>
</dbReference>
<dbReference type="NCBIfam" id="TIGR01125">
    <property type="entry name" value="30S ribosomal protein S12 methylthiotransferase RimO"/>
    <property type="match status" value="1"/>
</dbReference>
<dbReference type="NCBIfam" id="TIGR00089">
    <property type="entry name" value="MiaB/RimO family radical SAM methylthiotransferase"/>
    <property type="match status" value="1"/>
</dbReference>
<dbReference type="PANTHER" id="PTHR43837">
    <property type="entry name" value="RIBOSOMAL PROTEIN S12 METHYLTHIOTRANSFERASE RIMO"/>
    <property type="match status" value="1"/>
</dbReference>
<dbReference type="PANTHER" id="PTHR43837:SF1">
    <property type="entry name" value="RIBOSOMAL PROTEIN US12 METHYLTHIOTRANSFERASE RIMO"/>
    <property type="match status" value="1"/>
</dbReference>
<dbReference type="Pfam" id="PF04055">
    <property type="entry name" value="Radical_SAM"/>
    <property type="match status" value="1"/>
</dbReference>
<dbReference type="Pfam" id="PF18693">
    <property type="entry name" value="TRAM_2"/>
    <property type="match status" value="1"/>
</dbReference>
<dbReference type="Pfam" id="PF00919">
    <property type="entry name" value="UPF0004"/>
    <property type="match status" value="1"/>
</dbReference>
<dbReference type="SFLD" id="SFLDG01082">
    <property type="entry name" value="B12-binding_domain_containing"/>
    <property type="match status" value="1"/>
</dbReference>
<dbReference type="SFLD" id="SFLDG01061">
    <property type="entry name" value="methylthiotransferase"/>
    <property type="match status" value="1"/>
</dbReference>
<dbReference type="SFLD" id="SFLDF00274">
    <property type="entry name" value="ribosomal_protein_S12_methylth"/>
    <property type="match status" value="1"/>
</dbReference>
<dbReference type="SMART" id="SM00729">
    <property type="entry name" value="Elp3"/>
    <property type="match status" value="1"/>
</dbReference>
<dbReference type="SUPFAM" id="SSF102114">
    <property type="entry name" value="Radical SAM enzymes"/>
    <property type="match status" value="1"/>
</dbReference>
<dbReference type="PROSITE" id="PS51449">
    <property type="entry name" value="MTTASE_N"/>
    <property type="match status" value="1"/>
</dbReference>
<dbReference type="PROSITE" id="PS01278">
    <property type="entry name" value="MTTASE_RADICAL"/>
    <property type="match status" value="1"/>
</dbReference>
<dbReference type="PROSITE" id="PS51918">
    <property type="entry name" value="RADICAL_SAM"/>
    <property type="match status" value="1"/>
</dbReference>
<dbReference type="PROSITE" id="PS50926">
    <property type="entry name" value="TRAM"/>
    <property type="match status" value="1"/>
</dbReference>